<reference key="1">
    <citation type="journal article" date="1983" name="J. Mol. Biol.">
        <title>Complete nucleotide sequence of bacteriophage T7 DNA and the locations of T7 genetic elements.</title>
        <authorList>
            <person name="Dunn J.J."/>
            <person name="Studier F.W."/>
        </authorList>
    </citation>
    <scope>NUCLEOTIDE SEQUENCE [LARGE SCALE GENOMIC DNA]</scope>
</reference>
<reference key="2">
    <citation type="journal article" date="1981" name="J. Mol. Biol.">
        <title>Nucleotide sequence from the genetic left end of bacteriophage T7 DNA to the beginning of gene 4.</title>
        <authorList>
            <person name="Dunn J.J."/>
            <person name="Studier F.W."/>
        </authorList>
    </citation>
    <scope>NUCLEOTIDE SEQUENCE [GENOMIC DNA]</scope>
</reference>
<reference key="3">
    <citation type="journal article" date="1980" name="Nucleic Acids Res.">
        <title>The transcription termination site at the end of the early region of bacteriophage T7 DNA.</title>
        <authorList>
            <person name="Dunn J.J."/>
            <person name="Studier F.W."/>
        </authorList>
    </citation>
    <scope>NUCLEOTIDE SEQUENCE [GENOMIC DNA] OF 1-50</scope>
</reference>
<feature type="signal peptide" evidence="1">
    <location>
        <begin position="1"/>
        <end position="23"/>
    </location>
</feature>
<feature type="chain" id="PRO_0000106471" description="Protein 1.4">
    <location>
        <begin position="24"/>
        <end position="51"/>
    </location>
</feature>
<feature type="transmembrane region" description="Helical" evidence="1">
    <location>
        <begin position="28"/>
        <end position="48"/>
    </location>
</feature>
<protein>
    <recommendedName>
        <fullName>Protein 1.4</fullName>
    </recommendedName>
    <alternativeName>
        <fullName>Gene product 1.4</fullName>
        <shortName>Gp1.4</shortName>
    </alternativeName>
</protein>
<gene>
    <name type="ordered locus">1.4</name>
</gene>
<keyword id="KW-1043">Host membrane</keyword>
<keyword id="KW-0472">Membrane</keyword>
<keyword id="KW-1185">Reference proteome</keyword>
<keyword id="KW-0732">Signal</keyword>
<keyword id="KW-0812">Transmembrane</keyword>
<keyword id="KW-1133">Transmembrane helix</keyword>
<dbReference type="EMBL" id="V01146">
    <property type="protein sequence ID" value="CAA24394.1"/>
    <property type="molecule type" value="Genomic_DNA"/>
</dbReference>
<dbReference type="EMBL" id="V01124">
    <property type="protein sequence ID" value="CAA24323.1"/>
    <property type="molecule type" value="Genomic_DNA"/>
</dbReference>
<dbReference type="EMBL" id="V01127">
    <property type="protein sequence ID" value="CAA24337.1"/>
    <property type="molecule type" value="Genomic_DNA"/>
</dbReference>
<dbReference type="PIR" id="H43002">
    <property type="entry name" value="Q1BP47"/>
</dbReference>
<dbReference type="RefSeq" id="NP_041964.1">
    <property type="nucleotide sequence ID" value="NC_001604.1"/>
</dbReference>
<dbReference type="KEGG" id="vg:1261075"/>
<dbReference type="Proteomes" id="UP000000840">
    <property type="component" value="Genome"/>
</dbReference>
<dbReference type="GO" id="GO:0033644">
    <property type="term" value="C:host cell membrane"/>
    <property type="evidence" value="ECO:0007669"/>
    <property type="project" value="UniProtKB-SubCell"/>
</dbReference>
<dbReference type="GO" id="GO:0016020">
    <property type="term" value="C:membrane"/>
    <property type="evidence" value="ECO:0007669"/>
    <property type="project" value="UniProtKB-KW"/>
</dbReference>
<dbReference type="InterPro" id="IPR035180">
    <property type="entry name" value="DUF5464"/>
</dbReference>
<dbReference type="Pfam" id="PF17552">
    <property type="entry name" value="DUF5464"/>
    <property type="match status" value="1"/>
</dbReference>
<proteinExistence type="inferred from homology"/>
<evidence type="ECO:0000255" key="1"/>
<evidence type="ECO:0000305" key="2"/>
<comment type="subcellular location">
    <subcellularLocation>
        <location evidence="2">Host membrane</location>
        <topology evidence="2">Single-pass membrane protein</topology>
    </subcellularLocation>
</comment>
<name>Y14_BPT7</name>
<organismHost>
    <name type="scientific">Escherichia coli</name>
    <dbReference type="NCBI Taxonomy" id="562"/>
</organismHost>
<accession>P03791</accession>
<sequence length="51" mass="5447">MFKKVGKFLAALAAILTLAYILAVYPQVALVVVGACYLAAVCACVWSIVNW</sequence>
<organism>
    <name type="scientific">Escherichia phage T7</name>
    <name type="common">Bacteriophage T7</name>
    <dbReference type="NCBI Taxonomy" id="10760"/>
    <lineage>
        <taxon>Viruses</taxon>
        <taxon>Duplodnaviria</taxon>
        <taxon>Heunggongvirae</taxon>
        <taxon>Uroviricota</taxon>
        <taxon>Caudoviricetes</taxon>
        <taxon>Autographiviridae</taxon>
        <taxon>Studiervirinae</taxon>
        <taxon>Teseptimavirus</taxon>
        <taxon>Teseptimavirus T7</taxon>
    </lineage>
</organism>